<proteinExistence type="inferred from homology"/>
<sequence length="270" mass="29430">MTVLKEQPPRLLRGIPLAANDLRRTFGQREVLRGVDLHIPAGQFVAIVGRSGCGKSTLLRLLAGLDQPSGGELLAGAAPLAEAREDTRLMFQDARLLPWKKVIDNVGLGLSGNWRPRALEALDAVGLAERAHEWPAALSGGQKQRVALARALIHQPRLLLLDEPLGALDALTRIEMQQLIERLWRQHGFTVLLVTHDVSEAVAVADRVILIEDGAVGLDLVVDLPRPRVRGSHRLAALESEVLNRVLSVPGTPPEPEPVAPLPTHLRWAH</sequence>
<protein>
    <recommendedName>
        <fullName evidence="1">Aliphatic sulfonates import ATP-binding protein SsuB</fullName>
        <ecNumber evidence="1">7.6.2.14</ecNumber>
    </recommendedName>
</protein>
<comment type="function">
    <text evidence="1">Part of the ABC transporter complex SsuABC involved in aliphatic sulfonates import. Responsible for energy coupling to the transport system.</text>
</comment>
<comment type="catalytic activity">
    <reaction evidence="1">
        <text>ATP + H2O + aliphatic sulfonate-[sulfonate-binding protein]Side 1 = ADP + phosphate + aliphatic sulfonateSide 2 + [sulfonate-binding protein]Side 1.</text>
        <dbReference type="EC" id="7.6.2.14"/>
    </reaction>
</comment>
<comment type="subunit">
    <text evidence="1">The complex is composed of two ATP-binding proteins (SsuB), two transmembrane proteins (SsuC) and a solute-binding protein (SsuA).</text>
</comment>
<comment type="subcellular location">
    <subcellularLocation>
        <location evidence="1">Cell inner membrane</location>
        <topology evidence="1">Peripheral membrane protein</topology>
    </subcellularLocation>
</comment>
<comment type="similarity">
    <text evidence="1">Belongs to the ABC transporter superfamily. Aliphatic sulfonates importer (TC 3.A.1.17.2) family.</text>
</comment>
<accession>Q1IGL4</accession>
<organism>
    <name type="scientific">Pseudomonas entomophila (strain L48)</name>
    <dbReference type="NCBI Taxonomy" id="384676"/>
    <lineage>
        <taxon>Bacteria</taxon>
        <taxon>Pseudomonadati</taxon>
        <taxon>Pseudomonadota</taxon>
        <taxon>Gammaproteobacteria</taxon>
        <taxon>Pseudomonadales</taxon>
        <taxon>Pseudomonadaceae</taxon>
        <taxon>Pseudomonas</taxon>
    </lineage>
</organism>
<feature type="chain" id="PRO_0000279931" description="Aliphatic sulfonates import ATP-binding protein SsuB">
    <location>
        <begin position="1"/>
        <end position="270"/>
    </location>
</feature>
<feature type="domain" description="ABC transporter" evidence="1">
    <location>
        <begin position="17"/>
        <end position="238"/>
    </location>
</feature>
<feature type="region of interest" description="Disordered" evidence="2">
    <location>
        <begin position="250"/>
        <end position="270"/>
    </location>
</feature>
<feature type="compositionally biased region" description="Pro residues" evidence="2">
    <location>
        <begin position="251"/>
        <end position="261"/>
    </location>
</feature>
<feature type="binding site" evidence="1">
    <location>
        <begin position="49"/>
        <end position="56"/>
    </location>
    <ligand>
        <name>ATP</name>
        <dbReference type="ChEBI" id="CHEBI:30616"/>
    </ligand>
</feature>
<name>SSUB_PSEE4</name>
<evidence type="ECO:0000255" key="1">
    <source>
        <dbReference type="HAMAP-Rule" id="MF_01724"/>
    </source>
</evidence>
<evidence type="ECO:0000256" key="2">
    <source>
        <dbReference type="SAM" id="MobiDB-lite"/>
    </source>
</evidence>
<keyword id="KW-0067">ATP-binding</keyword>
<keyword id="KW-0997">Cell inner membrane</keyword>
<keyword id="KW-1003">Cell membrane</keyword>
<keyword id="KW-0472">Membrane</keyword>
<keyword id="KW-0547">Nucleotide-binding</keyword>
<keyword id="KW-1278">Translocase</keyword>
<keyword id="KW-0813">Transport</keyword>
<gene>
    <name evidence="1" type="primary">ssuB</name>
    <name type="ordered locus">PSEEN0221</name>
</gene>
<dbReference type="EC" id="7.6.2.14" evidence="1"/>
<dbReference type="EMBL" id="CT573326">
    <property type="protein sequence ID" value="CAK13188.1"/>
    <property type="molecule type" value="Genomic_DNA"/>
</dbReference>
<dbReference type="RefSeq" id="WP_011531649.1">
    <property type="nucleotide sequence ID" value="NC_008027.1"/>
</dbReference>
<dbReference type="SMR" id="Q1IGL4"/>
<dbReference type="STRING" id="384676.PSEEN0221"/>
<dbReference type="GeneID" id="32803568"/>
<dbReference type="KEGG" id="pen:PSEEN0221"/>
<dbReference type="eggNOG" id="COG1116">
    <property type="taxonomic scope" value="Bacteria"/>
</dbReference>
<dbReference type="HOGENOM" id="CLU_000604_1_22_6"/>
<dbReference type="OrthoDB" id="9802264at2"/>
<dbReference type="Proteomes" id="UP000000658">
    <property type="component" value="Chromosome"/>
</dbReference>
<dbReference type="GO" id="GO:0005886">
    <property type="term" value="C:plasma membrane"/>
    <property type="evidence" value="ECO:0007669"/>
    <property type="project" value="UniProtKB-SubCell"/>
</dbReference>
<dbReference type="GO" id="GO:0005524">
    <property type="term" value="F:ATP binding"/>
    <property type="evidence" value="ECO:0007669"/>
    <property type="project" value="UniProtKB-KW"/>
</dbReference>
<dbReference type="GO" id="GO:0016887">
    <property type="term" value="F:ATP hydrolysis activity"/>
    <property type="evidence" value="ECO:0007669"/>
    <property type="project" value="InterPro"/>
</dbReference>
<dbReference type="CDD" id="cd03293">
    <property type="entry name" value="ABC_NrtD_SsuB_transporters"/>
    <property type="match status" value="1"/>
</dbReference>
<dbReference type="FunFam" id="3.40.50.300:FF:000653">
    <property type="entry name" value="Aliphatic sulfonates import ATP-binding protein SsuB"/>
    <property type="match status" value="1"/>
</dbReference>
<dbReference type="Gene3D" id="3.40.50.300">
    <property type="entry name" value="P-loop containing nucleotide triphosphate hydrolases"/>
    <property type="match status" value="1"/>
</dbReference>
<dbReference type="InterPro" id="IPR003593">
    <property type="entry name" value="AAA+_ATPase"/>
</dbReference>
<dbReference type="InterPro" id="IPR003439">
    <property type="entry name" value="ABC_transporter-like_ATP-bd"/>
</dbReference>
<dbReference type="InterPro" id="IPR017871">
    <property type="entry name" value="ABC_transporter-like_CS"/>
</dbReference>
<dbReference type="InterPro" id="IPR050166">
    <property type="entry name" value="ABC_transporter_ATP-bind"/>
</dbReference>
<dbReference type="InterPro" id="IPR027417">
    <property type="entry name" value="P-loop_NTPase"/>
</dbReference>
<dbReference type="NCBIfam" id="NF008420">
    <property type="entry name" value="PRK11247.1"/>
    <property type="match status" value="1"/>
</dbReference>
<dbReference type="PANTHER" id="PTHR42788:SF17">
    <property type="entry name" value="ALIPHATIC SULFONATES IMPORT ATP-BINDING PROTEIN SSUB"/>
    <property type="match status" value="1"/>
</dbReference>
<dbReference type="PANTHER" id="PTHR42788">
    <property type="entry name" value="TAURINE IMPORT ATP-BINDING PROTEIN-RELATED"/>
    <property type="match status" value="1"/>
</dbReference>
<dbReference type="Pfam" id="PF00005">
    <property type="entry name" value="ABC_tran"/>
    <property type="match status" value="1"/>
</dbReference>
<dbReference type="SMART" id="SM00382">
    <property type="entry name" value="AAA"/>
    <property type="match status" value="1"/>
</dbReference>
<dbReference type="SUPFAM" id="SSF52540">
    <property type="entry name" value="P-loop containing nucleoside triphosphate hydrolases"/>
    <property type="match status" value="1"/>
</dbReference>
<dbReference type="PROSITE" id="PS00211">
    <property type="entry name" value="ABC_TRANSPORTER_1"/>
    <property type="match status" value="1"/>
</dbReference>
<dbReference type="PROSITE" id="PS50893">
    <property type="entry name" value="ABC_TRANSPORTER_2"/>
    <property type="match status" value="1"/>
</dbReference>
<dbReference type="PROSITE" id="PS51291">
    <property type="entry name" value="SSUB"/>
    <property type="match status" value="1"/>
</dbReference>
<reference key="1">
    <citation type="journal article" date="2006" name="Nat. Biotechnol.">
        <title>Complete genome sequence of the entomopathogenic and metabolically versatile soil bacterium Pseudomonas entomophila.</title>
        <authorList>
            <person name="Vodovar N."/>
            <person name="Vallenet D."/>
            <person name="Cruveiller S."/>
            <person name="Rouy Z."/>
            <person name="Barbe V."/>
            <person name="Acosta C."/>
            <person name="Cattolico L."/>
            <person name="Jubin C."/>
            <person name="Lajus A."/>
            <person name="Segurens B."/>
            <person name="Vacherie B."/>
            <person name="Wincker P."/>
            <person name="Weissenbach J."/>
            <person name="Lemaitre B."/>
            <person name="Medigue C."/>
            <person name="Boccard F."/>
        </authorList>
    </citation>
    <scope>NUCLEOTIDE SEQUENCE [LARGE SCALE GENOMIC DNA]</scope>
    <source>
        <strain>L48</strain>
    </source>
</reference>